<evidence type="ECO:0000255" key="1">
    <source>
        <dbReference type="HAMAP-Rule" id="MF_00008"/>
    </source>
</evidence>
<evidence type="ECO:0000305" key="2"/>
<protein>
    <recommendedName>
        <fullName evidence="1">Thymidylate synthase</fullName>
        <shortName evidence="1">TS</shortName>
        <shortName evidence="1">TSase</shortName>
        <ecNumber evidence="1">2.1.1.45</ecNumber>
    </recommendedName>
</protein>
<dbReference type="EC" id="2.1.1.45" evidence="1"/>
<dbReference type="EMBL" id="CP000463">
    <property type="protein sequence ID" value="ABJ06094.1"/>
    <property type="status" value="ALT_INIT"/>
    <property type="molecule type" value="Genomic_DNA"/>
</dbReference>
<dbReference type="SMR" id="Q07PP0"/>
<dbReference type="STRING" id="316055.RPE_2150"/>
<dbReference type="KEGG" id="rpe:RPE_2150"/>
<dbReference type="eggNOG" id="COG0207">
    <property type="taxonomic scope" value="Bacteria"/>
</dbReference>
<dbReference type="HOGENOM" id="CLU_021669_0_0_5"/>
<dbReference type="UniPathway" id="UPA00575"/>
<dbReference type="GO" id="GO:0005829">
    <property type="term" value="C:cytosol"/>
    <property type="evidence" value="ECO:0007669"/>
    <property type="project" value="TreeGrafter"/>
</dbReference>
<dbReference type="GO" id="GO:0004799">
    <property type="term" value="F:thymidylate synthase activity"/>
    <property type="evidence" value="ECO:0007669"/>
    <property type="project" value="UniProtKB-UniRule"/>
</dbReference>
<dbReference type="GO" id="GO:0006231">
    <property type="term" value="P:dTMP biosynthetic process"/>
    <property type="evidence" value="ECO:0007669"/>
    <property type="project" value="UniProtKB-UniRule"/>
</dbReference>
<dbReference type="GO" id="GO:0006235">
    <property type="term" value="P:dTTP biosynthetic process"/>
    <property type="evidence" value="ECO:0007669"/>
    <property type="project" value="UniProtKB-UniRule"/>
</dbReference>
<dbReference type="GO" id="GO:0032259">
    <property type="term" value="P:methylation"/>
    <property type="evidence" value="ECO:0007669"/>
    <property type="project" value="UniProtKB-KW"/>
</dbReference>
<dbReference type="CDD" id="cd00351">
    <property type="entry name" value="TS_Pyrimidine_HMase"/>
    <property type="match status" value="1"/>
</dbReference>
<dbReference type="Gene3D" id="3.30.572.10">
    <property type="entry name" value="Thymidylate synthase/dCMP hydroxymethylase domain"/>
    <property type="match status" value="1"/>
</dbReference>
<dbReference type="HAMAP" id="MF_00008">
    <property type="entry name" value="Thymidy_synth_bact"/>
    <property type="match status" value="1"/>
</dbReference>
<dbReference type="InterPro" id="IPR045097">
    <property type="entry name" value="Thymidate_synth/dCMP_Mease"/>
</dbReference>
<dbReference type="InterPro" id="IPR023451">
    <property type="entry name" value="Thymidate_synth/dCMP_Mease_dom"/>
</dbReference>
<dbReference type="InterPro" id="IPR036926">
    <property type="entry name" value="Thymidate_synth/dCMP_Mease_sf"/>
</dbReference>
<dbReference type="InterPro" id="IPR000398">
    <property type="entry name" value="Thymidylate_synthase"/>
</dbReference>
<dbReference type="InterPro" id="IPR020940">
    <property type="entry name" value="Thymidylate_synthase_AS"/>
</dbReference>
<dbReference type="NCBIfam" id="NF002497">
    <property type="entry name" value="PRK01827.1-3"/>
    <property type="match status" value="1"/>
</dbReference>
<dbReference type="NCBIfam" id="TIGR03284">
    <property type="entry name" value="thym_sym"/>
    <property type="match status" value="1"/>
</dbReference>
<dbReference type="PANTHER" id="PTHR11548">
    <property type="entry name" value="THYMIDYLATE SYNTHASE 1"/>
    <property type="match status" value="1"/>
</dbReference>
<dbReference type="PANTHER" id="PTHR11548:SF1">
    <property type="entry name" value="THYMIDYLATE SYNTHASE 1"/>
    <property type="match status" value="1"/>
</dbReference>
<dbReference type="Pfam" id="PF00303">
    <property type="entry name" value="Thymidylat_synt"/>
    <property type="match status" value="1"/>
</dbReference>
<dbReference type="PRINTS" id="PR00108">
    <property type="entry name" value="THYMDSNTHASE"/>
</dbReference>
<dbReference type="SUPFAM" id="SSF55831">
    <property type="entry name" value="Thymidylate synthase/dCMP hydroxymethylase"/>
    <property type="match status" value="1"/>
</dbReference>
<dbReference type="PROSITE" id="PS00091">
    <property type="entry name" value="THYMIDYLATE_SYNTHASE"/>
    <property type="match status" value="1"/>
</dbReference>
<organism>
    <name type="scientific">Rhodopseudomonas palustris (strain BisA53)</name>
    <dbReference type="NCBI Taxonomy" id="316055"/>
    <lineage>
        <taxon>Bacteria</taxon>
        <taxon>Pseudomonadati</taxon>
        <taxon>Pseudomonadota</taxon>
        <taxon>Alphaproteobacteria</taxon>
        <taxon>Hyphomicrobiales</taxon>
        <taxon>Nitrobacteraceae</taxon>
        <taxon>Rhodopseudomonas</taxon>
    </lineage>
</organism>
<proteinExistence type="inferred from homology"/>
<feature type="chain" id="PRO_0000321482" description="Thymidylate synthase">
    <location>
        <begin position="1"/>
        <end position="298"/>
    </location>
</feature>
<feature type="active site" description="Nucleophile" evidence="1">
    <location>
        <position position="179"/>
    </location>
</feature>
<feature type="binding site" description="in other chain" evidence="1">
    <location>
        <position position="25"/>
    </location>
    <ligand>
        <name>dUMP</name>
        <dbReference type="ChEBI" id="CHEBI:246422"/>
        <note>ligand shared between dimeric partners</note>
    </ligand>
</feature>
<feature type="binding site" evidence="1">
    <location>
        <begin position="159"/>
        <end position="160"/>
    </location>
    <ligand>
        <name>dUMP</name>
        <dbReference type="ChEBI" id="CHEBI:246422"/>
        <note>ligand shared between dimeric partners</note>
    </ligand>
</feature>
<feature type="binding site" description="in other chain" evidence="1">
    <location>
        <begin position="200"/>
        <end position="203"/>
    </location>
    <ligand>
        <name>dUMP</name>
        <dbReference type="ChEBI" id="CHEBI:246422"/>
        <note>ligand shared between dimeric partners</note>
    </ligand>
</feature>
<feature type="binding site" evidence="1">
    <location>
        <position position="203"/>
    </location>
    <ligand>
        <name>(6R)-5,10-methylene-5,6,7,8-tetrahydrofolate</name>
        <dbReference type="ChEBI" id="CHEBI:15636"/>
    </ligand>
</feature>
<feature type="binding site" description="in other chain" evidence="1">
    <location>
        <position position="211"/>
    </location>
    <ligand>
        <name>dUMP</name>
        <dbReference type="ChEBI" id="CHEBI:246422"/>
        <note>ligand shared between dimeric partners</note>
    </ligand>
</feature>
<feature type="binding site" description="in other chain" evidence="1">
    <location>
        <begin position="241"/>
        <end position="243"/>
    </location>
    <ligand>
        <name>dUMP</name>
        <dbReference type="ChEBI" id="CHEBI:246422"/>
        <note>ligand shared between dimeric partners</note>
    </ligand>
</feature>
<feature type="binding site" evidence="1">
    <location>
        <position position="297"/>
    </location>
    <ligand>
        <name>(6R)-5,10-methylene-5,6,7,8-tetrahydrofolate</name>
        <dbReference type="ChEBI" id="CHEBI:15636"/>
    </ligand>
</feature>
<accession>Q07PP0</accession>
<gene>
    <name evidence="1" type="primary">thyA</name>
    <name type="ordered locus">RPE_2150</name>
</gene>
<keyword id="KW-0963">Cytoplasm</keyword>
<keyword id="KW-0489">Methyltransferase</keyword>
<keyword id="KW-0545">Nucleotide biosynthesis</keyword>
<keyword id="KW-0808">Transferase</keyword>
<comment type="function">
    <text evidence="1">Catalyzes the reductive methylation of 2'-deoxyuridine-5'-monophosphate (dUMP) to 2'-deoxythymidine-5'-monophosphate (dTMP) while utilizing 5,10-methylenetetrahydrofolate (mTHF) as the methyl donor and reductant in the reaction, yielding dihydrofolate (DHF) as a by-product. This enzymatic reaction provides an intracellular de novo source of dTMP, an essential precursor for DNA biosynthesis.</text>
</comment>
<comment type="catalytic activity">
    <reaction evidence="1">
        <text>dUMP + (6R)-5,10-methylene-5,6,7,8-tetrahydrofolate = 7,8-dihydrofolate + dTMP</text>
        <dbReference type="Rhea" id="RHEA:12104"/>
        <dbReference type="ChEBI" id="CHEBI:15636"/>
        <dbReference type="ChEBI" id="CHEBI:57451"/>
        <dbReference type="ChEBI" id="CHEBI:63528"/>
        <dbReference type="ChEBI" id="CHEBI:246422"/>
        <dbReference type="EC" id="2.1.1.45"/>
    </reaction>
</comment>
<comment type="pathway">
    <text evidence="1">Pyrimidine metabolism; dTTP biosynthesis.</text>
</comment>
<comment type="subunit">
    <text evidence="1">Homodimer.</text>
</comment>
<comment type="subcellular location">
    <subcellularLocation>
        <location evidence="1">Cytoplasm</location>
    </subcellularLocation>
</comment>
<comment type="similarity">
    <text evidence="1">Belongs to the thymidylate synthase family. Bacterial-type ThyA subfamily.</text>
</comment>
<comment type="sequence caution" evidence="2">
    <conflict type="erroneous initiation">
        <sequence resource="EMBL-CDS" id="ABJ06094"/>
    </conflict>
</comment>
<sequence length="298" mass="34172">MRHPEHQYLDLLAQVLEKGDQRIDRTGVGTRALFGAMIRFDLSDGRVPILTTKRVYWKTAVKEMLWFLTGQTNIQALLKENVRIWSDWPLARYRKETGDSISQEDFEKRVVEDNAFATRWGDLGPVYGKQWRRWLGADGREYDQIAELVQTLKSNPASRRMLFHAWNPPELGAMALPPCHMVYQYHVTSSGKLNCILYQRSCDLLLGAAFNYAAASALQLMLAQQADLTPGEFIWFGGDVHLYLNHLDQAREQISRAPRPFPTMRLTRRPDSIDGYRISDFEVDGYEPHAAIKADVAV</sequence>
<reference key="1">
    <citation type="submission" date="2006-09" db="EMBL/GenBank/DDBJ databases">
        <title>Complete sequence of Rhodopseudomonas palustris BisA53.</title>
        <authorList>
            <consortium name="US DOE Joint Genome Institute"/>
            <person name="Copeland A."/>
            <person name="Lucas S."/>
            <person name="Lapidus A."/>
            <person name="Barry K."/>
            <person name="Detter J.C."/>
            <person name="Glavina del Rio T."/>
            <person name="Hammon N."/>
            <person name="Israni S."/>
            <person name="Dalin E."/>
            <person name="Tice H."/>
            <person name="Pitluck S."/>
            <person name="Chain P."/>
            <person name="Malfatti S."/>
            <person name="Shin M."/>
            <person name="Vergez L."/>
            <person name="Schmutz J."/>
            <person name="Larimer F."/>
            <person name="Land M."/>
            <person name="Hauser L."/>
            <person name="Pelletier D.A."/>
            <person name="Kyrpides N."/>
            <person name="Kim E."/>
            <person name="Harwood C.S."/>
            <person name="Oda Y."/>
            <person name="Richardson P."/>
        </authorList>
    </citation>
    <scope>NUCLEOTIDE SEQUENCE [LARGE SCALE GENOMIC DNA]</scope>
    <source>
        <strain>BisA53</strain>
    </source>
</reference>
<name>TYSY_RHOP5</name>